<keyword id="KW-0963">Cytoplasm</keyword>
<keyword id="KW-0378">Hydrolase</keyword>
<keyword id="KW-0645">Protease</keyword>
<keyword id="KW-1185">Reference proteome</keyword>
<keyword id="KW-0788">Thiol protease</keyword>
<evidence type="ECO:0000250" key="1"/>
<evidence type="ECO:0000305" key="2"/>
<dbReference type="EC" id="3.4.19.3"/>
<dbReference type="EMBL" id="AE000516">
    <property type="protein sequence ID" value="AAK44557.1"/>
    <property type="molecule type" value="Genomic_DNA"/>
</dbReference>
<dbReference type="PIR" id="H70525">
    <property type="entry name" value="H70525"/>
</dbReference>
<dbReference type="RefSeq" id="WP_003401632.1">
    <property type="nucleotide sequence ID" value="NZ_KK341227.1"/>
</dbReference>
<dbReference type="SMR" id="P9WIJ4"/>
<dbReference type="MEROPS" id="C15.001"/>
<dbReference type="GeneID" id="45424287"/>
<dbReference type="KEGG" id="mtc:MT0334"/>
<dbReference type="PATRIC" id="fig|83331.31.peg.354"/>
<dbReference type="HOGENOM" id="CLU_043960_4_3_11"/>
<dbReference type="Proteomes" id="UP000001020">
    <property type="component" value="Chromosome"/>
</dbReference>
<dbReference type="GO" id="GO:0005829">
    <property type="term" value="C:cytosol"/>
    <property type="evidence" value="ECO:0007669"/>
    <property type="project" value="InterPro"/>
</dbReference>
<dbReference type="GO" id="GO:0016920">
    <property type="term" value="F:pyroglutamyl-peptidase activity"/>
    <property type="evidence" value="ECO:0007669"/>
    <property type="project" value="UniProtKB-UniRule"/>
</dbReference>
<dbReference type="GO" id="GO:0006508">
    <property type="term" value="P:proteolysis"/>
    <property type="evidence" value="ECO:0007669"/>
    <property type="project" value="UniProtKB-KW"/>
</dbReference>
<dbReference type="CDD" id="cd00501">
    <property type="entry name" value="Peptidase_C15"/>
    <property type="match status" value="1"/>
</dbReference>
<dbReference type="Gene3D" id="3.40.630.20">
    <property type="entry name" value="Peptidase C15, pyroglutamyl peptidase I-like"/>
    <property type="match status" value="1"/>
</dbReference>
<dbReference type="HAMAP" id="MF_00417">
    <property type="entry name" value="Pyrrolid_peptidase"/>
    <property type="match status" value="1"/>
</dbReference>
<dbReference type="InterPro" id="IPR000816">
    <property type="entry name" value="Peptidase_C15"/>
</dbReference>
<dbReference type="InterPro" id="IPR016125">
    <property type="entry name" value="Peptidase_C15-like"/>
</dbReference>
<dbReference type="InterPro" id="IPR036440">
    <property type="entry name" value="Peptidase_C15-like_sf"/>
</dbReference>
<dbReference type="InterPro" id="IPR029762">
    <property type="entry name" value="PGP-I_bact-type"/>
</dbReference>
<dbReference type="InterPro" id="IPR033694">
    <property type="entry name" value="PGPEP1_Cys_AS"/>
</dbReference>
<dbReference type="InterPro" id="IPR033693">
    <property type="entry name" value="PGPEP1_Glu_AS"/>
</dbReference>
<dbReference type="NCBIfam" id="NF009674">
    <property type="entry name" value="PRK13195.1"/>
    <property type="match status" value="1"/>
</dbReference>
<dbReference type="NCBIfam" id="NF009676">
    <property type="entry name" value="PRK13197.1"/>
    <property type="match status" value="1"/>
</dbReference>
<dbReference type="NCBIfam" id="TIGR00504">
    <property type="entry name" value="pyro_pdase"/>
    <property type="match status" value="1"/>
</dbReference>
<dbReference type="PANTHER" id="PTHR23402">
    <property type="entry name" value="PROTEASE FAMILY C15 PYROGLUTAMYL-PEPTIDASE I-RELATED"/>
    <property type="match status" value="1"/>
</dbReference>
<dbReference type="PANTHER" id="PTHR23402:SF1">
    <property type="entry name" value="PYROGLUTAMYL-PEPTIDASE I"/>
    <property type="match status" value="1"/>
</dbReference>
<dbReference type="Pfam" id="PF01470">
    <property type="entry name" value="Peptidase_C15"/>
    <property type="match status" value="1"/>
</dbReference>
<dbReference type="PIRSF" id="PIRSF015592">
    <property type="entry name" value="Prld-crbxl_pptds"/>
    <property type="match status" value="1"/>
</dbReference>
<dbReference type="PRINTS" id="PR00706">
    <property type="entry name" value="PYROGLUPTASE"/>
</dbReference>
<dbReference type="SUPFAM" id="SSF53182">
    <property type="entry name" value="Pyrrolidone carboxyl peptidase (pyroglutamate aminopeptidase)"/>
    <property type="match status" value="1"/>
</dbReference>
<dbReference type="PROSITE" id="PS01334">
    <property type="entry name" value="PYRASE_CYS"/>
    <property type="match status" value="1"/>
</dbReference>
<dbReference type="PROSITE" id="PS01333">
    <property type="entry name" value="PYRASE_GLU"/>
    <property type="match status" value="1"/>
</dbReference>
<proteinExistence type="inferred from homology"/>
<gene>
    <name type="primary">pcp</name>
    <name type="ordered locus">MT0334</name>
</gene>
<organism>
    <name type="scientific">Mycobacterium tuberculosis (strain CDC 1551 / Oshkosh)</name>
    <dbReference type="NCBI Taxonomy" id="83331"/>
    <lineage>
        <taxon>Bacteria</taxon>
        <taxon>Bacillati</taxon>
        <taxon>Actinomycetota</taxon>
        <taxon>Actinomycetes</taxon>
        <taxon>Mycobacteriales</taxon>
        <taxon>Mycobacteriaceae</taxon>
        <taxon>Mycobacterium</taxon>
        <taxon>Mycobacterium tuberculosis complex</taxon>
    </lineage>
</organism>
<protein>
    <recommendedName>
        <fullName>Pyrrolidone-carboxylate peptidase</fullName>
        <ecNumber>3.4.19.3</ecNumber>
    </recommendedName>
    <alternativeName>
        <fullName>5-oxoprolyl-peptidase</fullName>
    </alternativeName>
    <alternativeName>
        <fullName>Pyroglutamyl-peptidase I</fullName>
        <shortName>PGP-I</shortName>
        <shortName>Pyrase</shortName>
    </alternativeName>
</protein>
<accession>P9WIJ4</accession>
<accession>L0T508</accession>
<accession>O07930</accession>
<accession>P0A5R4</accession>
<sequence length="222" mass="23193">MSKVLVTGFGPYGVTPVNPAQLTAEELDGRTIAGATVISRIVPNTFFESIAAAQQAIAEIEPALVIMLGEYPGRSMITVERLAQNVNDCGRYGLADCAGRVLVGEPTDPAGPVAYHATVPVRAMVLAMRKAGVPADVSDAAGTFVCNHLMYGVLHHLAQKGLPVRAGWIHLPCLPSVAALDHNLGVPSMSVQTAVAGVTAGIEAAIRQSADIREPIPSRLQI</sequence>
<reference key="1">
    <citation type="journal article" date="2002" name="J. Bacteriol.">
        <title>Whole-genome comparison of Mycobacterium tuberculosis clinical and laboratory strains.</title>
        <authorList>
            <person name="Fleischmann R.D."/>
            <person name="Alland D."/>
            <person name="Eisen J.A."/>
            <person name="Carpenter L."/>
            <person name="White O."/>
            <person name="Peterson J.D."/>
            <person name="DeBoy R.T."/>
            <person name="Dodson R.J."/>
            <person name="Gwinn M.L."/>
            <person name="Haft D.H."/>
            <person name="Hickey E.K."/>
            <person name="Kolonay J.F."/>
            <person name="Nelson W.C."/>
            <person name="Umayam L.A."/>
            <person name="Ermolaeva M.D."/>
            <person name="Salzberg S.L."/>
            <person name="Delcher A."/>
            <person name="Utterback T.R."/>
            <person name="Weidman J.F."/>
            <person name="Khouri H.M."/>
            <person name="Gill J."/>
            <person name="Mikula A."/>
            <person name="Bishai W."/>
            <person name="Jacobs W.R. Jr."/>
            <person name="Venter J.C."/>
            <person name="Fraser C.M."/>
        </authorList>
    </citation>
    <scope>NUCLEOTIDE SEQUENCE [LARGE SCALE GENOMIC DNA]</scope>
    <source>
        <strain>CDC 1551 / Oshkosh</strain>
    </source>
</reference>
<name>PCP_MYCTO</name>
<feature type="chain" id="PRO_0000427996" description="Pyrrolidone-carboxylate peptidase">
    <location>
        <begin position="1"/>
        <end position="222"/>
    </location>
</feature>
<feature type="active site" evidence="1">
    <location>
        <position position="80"/>
    </location>
</feature>
<feature type="active site" evidence="1">
    <location>
        <position position="146"/>
    </location>
</feature>
<feature type="active site" evidence="1">
    <location>
        <position position="170"/>
    </location>
</feature>
<comment type="function">
    <text evidence="1">Removes 5-oxoproline from various penultimate amino acid residues except L-proline.</text>
</comment>
<comment type="catalytic activity">
    <reaction>
        <text>Release of an N-terminal pyroglutamyl group from a polypeptide, the second amino acid generally not being Pro.</text>
        <dbReference type="EC" id="3.4.19.3"/>
    </reaction>
</comment>
<comment type="subunit">
    <text evidence="1">Homotetramer.</text>
</comment>
<comment type="subcellular location">
    <subcellularLocation>
        <location evidence="1">Cytoplasm</location>
    </subcellularLocation>
</comment>
<comment type="similarity">
    <text evidence="2">Belongs to the peptidase C15 family.</text>
</comment>